<dbReference type="EMBL" id="CP000253">
    <property type="protein sequence ID" value="ABD30699.1"/>
    <property type="molecule type" value="Genomic_DNA"/>
</dbReference>
<dbReference type="RefSeq" id="WP_000087385.1">
    <property type="nucleotide sequence ID" value="NZ_LS483365.1"/>
</dbReference>
<dbReference type="RefSeq" id="YP_500135.1">
    <property type="nucleotide sequence ID" value="NC_007795.1"/>
</dbReference>
<dbReference type="SMR" id="Q2FY45"/>
<dbReference type="STRING" id="93061.SAOUHSC_01621"/>
<dbReference type="PaxDb" id="1280-SAXN108_1548"/>
<dbReference type="GeneID" id="3919959"/>
<dbReference type="KEGG" id="sao:SAOUHSC_01621"/>
<dbReference type="PATRIC" id="fig|93061.5.peg.1475"/>
<dbReference type="eggNOG" id="COG0781">
    <property type="taxonomic scope" value="Bacteria"/>
</dbReference>
<dbReference type="HOGENOM" id="CLU_087843_3_3_9"/>
<dbReference type="OrthoDB" id="9811381at2"/>
<dbReference type="PRO" id="PR:Q2FY45"/>
<dbReference type="Proteomes" id="UP000008816">
    <property type="component" value="Chromosome"/>
</dbReference>
<dbReference type="GO" id="GO:0005829">
    <property type="term" value="C:cytosol"/>
    <property type="evidence" value="ECO:0000318"/>
    <property type="project" value="GO_Central"/>
</dbReference>
<dbReference type="GO" id="GO:0003723">
    <property type="term" value="F:RNA binding"/>
    <property type="evidence" value="ECO:0007669"/>
    <property type="project" value="UniProtKB-UniRule"/>
</dbReference>
<dbReference type="GO" id="GO:0006353">
    <property type="term" value="P:DNA-templated transcription termination"/>
    <property type="evidence" value="ECO:0007669"/>
    <property type="project" value="UniProtKB-UniRule"/>
</dbReference>
<dbReference type="GO" id="GO:0031564">
    <property type="term" value="P:transcription antitermination"/>
    <property type="evidence" value="ECO:0007669"/>
    <property type="project" value="UniProtKB-KW"/>
</dbReference>
<dbReference type="FunFam" id="1.10.940.10:FF:000011">
    <property type="entry name" value="Transcription antitermination protein NusB"/>
    <property type="match status" value="1"/>
</dbReference>
<dbReference type="Gene3D" id="1.10.940.10">
    <property type="entry name" value="NusB-like"/>
    <property type="match status" value="1"/>
</dbReference>
<dbReference type="HAMAP" id="MF_00073">
    <property type="entry name" value="NusB"/>
    <property type="match status" value="1"/>
</dbReference>
<dbReference type="InterPro" id="IPR035926">
    <property type="entry name" value="NusB-like_sf"/>
</dbReference>
<dbReference type="InterPro" id="IPR011605">
    <property type="entry name" value="NusB_fam"/>
</dbReference>
<dbReference type="InterPro" id="IPR006027">
    <property type="entry name" value="NusB_RsmB_TIM44"/>
</dbReference>
<dbReference type="NCBIfam" id="TIGR01951">
    <property type="entry name" value="nusB"/>
    <property type="match status" value="1"/>
</dbReference>
<dbReference type="PANTHER" id="PTHR11078:SF3">
    <property type="entry name" value="ANTITERMINATION NUSB DOMAIN-CONTAINING PROTEIN"/>
    <property type="match status" value="1"/>
</dbReference>
<dbReference type="PANTHER" id="PTHR11078">
    <property type="entry name" value="N UTILIZATION SUBSTANCE PROTEIN B-RELATED"/>
    <property type="match status" value="1"/>
</dbReference>
<dbReference type="Pfam" id="PF01029">
    <property type="entry name" value="NusB"/>
    <property type="match status" value="1"/>
</dbReference>
<dbReference type="SUPFAM" id="SSF48013">
    <property type="entry name" value="NusB-like"/>
    <property type="match status" value="1"/>
</dbReference>
<protein>
    <recommendedName>
        <fullName evidence="1">Transcription antitermination protein NusB</fullName>
    </recommendedName>
    <alternativeName>
        <fullName evidence="1">Antitermination factor NusB</fullName>
    </alternativeName>
</protein>
<keyword id="KW-1185">Reference proteome</keyword>
<keyword id="KW-0694">RNA-binding</keyword>
<keyword id="KW-0804">Transcription</keyword>
<keyword id="KW-0889">Transcription antitermination</keyword>
<keyword id="KW-0805">Transcription regulation</keyword>
<accession>Q2FY45</accession>
<proteinExistence type="inferred from homology"/>
<evidence type="ECO:0000255" key="1">
    <source>
        <dbReference type="HAMAP-Rule" id="MF_00073"/>
    </source>
</evidence>
<gene>
    <name evidence="1" type="primary">nusB</name>
    <name type="ordered locus">SAOUHSC_01621</name>
</gene>
<name>NUSB_STAA8</name>
<organism>
    <name type="scientific">Staphylococcus aureus (strain NCTC 8325 / PS 47)</name>
    <dbReference type="NCBI Taxonomy" id="93061"/>
    <lineage>
        <taxon>Bacteria</taxon>
        <taxon>Bacillati</taxon>
        <taxon>Bacillota</taxon>
        <taxon>Bacilli</taxon>
        <taxon>Bacillales</taxon>
        <taxon>Staphylococcaceae</taxon>
        <taxon>Staphylococcus</taxon>
    </lineage>
</organism>
<comment type="function">
    <text evidence="1">Involved in transcription antitermination. Required for transcription of ribosomal RNA (rRNA) genes. Binds specifically to the boxA antiterminator sequence of the ribosomal RNA (rrn) operons.</text>
</comment>
<comment type="similarity">
    <text evidence="1">Belongs to the NusB family.</text>
</comment>
<reference key="1">
    <citation type="book" date="2006" name="Gram positive pathogens, 2nd edition">
        <title>The Staphylococcus aureus NCTC 8325 genome.</title>
        <editorList>
            <person name="Fischetti V."/>
            <person name="Novick R."/>
            <person name="Ferretti J."/>
            <person name="Portnoy D."/>
            <person name="Rood J."/>
        </editorList>
        <authorList>
            <person name="Gillaspy A.F."/>
            <person name="Worrell V."/>
            <person name="Orvis J."/>
            <person name="Roe B.A."/>
            <person name="Dyer D.W."/>
            <person name="Iandolo J.J."/>
        </authorList>
    </citation>
    <scope>NUCLEOTIDE SEQUENCE [LARGE SCALE GENOMIC DNA]</scope>
    <source>
        <strain>NCTC 8325 / PS 47</strain>
    </source>
</reference>
<feature type="chain" id="PRO_0000265598" description="Transcription antitermination protein NusB">
    <location>
        <begin position="1"/>
        <end position="129"/>
    </location>
</feature>
<sequence>MSRKESRVQAFQTLFQLEMKDSDLTINEAISFIKDDNPDLDFEFIHWLVSGVKDHEPVLDETISPYLKDWTIARLLKTDRIILRMATYEILHSDTPAKVVMNEAVELTKQFSDDDHYKFINGVLSNIKK</sequence>